<accession>B5RKV4</accession>
<feature type="chain" id="PRO_1000096478" description="Triosephosphate isomerase">
    <location>
        <begin position="1"/>
        <end position="254"/>
    </location>
</feature>
<feature type="active site" description="Electrophile" evidence="1">
    <location>
        <position position="96"/>
    </location>
</feature>
<feature type="active site" description="Proton acceptor" evidence="1">
    <location>
        <position position="169"/>
    </location>
</feature>
<feature type="binding site" evidence="1">
    <location>
        <begin position="9"/>
        <end position="11"/>
    </location>
    <ligand>
        <name>substrate</name>
    </ligand>
</feature>
<feature type="binding site" evidence="1">
    <location>
        <position position="175"/>
    </location>
    <ligand>
        <name>substrate</name>
    </ligand>
</feature>
<feature type="binding site" evidence="1">
    <location>
        <position position="215"/>
    </location>
    <ligand>
        <name>substrate</name>
    </ligand>
</feature>
<feature type="binding site" evidence="1">
    <location>
        <begin position="236"/>
        <end position="237"/>
    </location>
    <ligand>
        <name>substrate</name>
    </ligand>
</feature>
<sequence>MRKVFLAGNWKMHYTSVEAADVAKQIVDGVYNINNNVVVMVTPTFTSLCKVCRVTKGTNVLLGAQNMSYENSGARTSEIAPSMLLEFGVDYVILGHSECRTYLGENDEIINKKVLTGLKHPFKYLILCVGETLEEREKGKTLDVVLNQVRNGLASVYESDLQRIILAYEPVWAIGTGKTATKEEAQEVHKAIRLEIQSLYSKSAADNIIIQYGGSVNVDNVEGLMGENDIDGALIGGASLKADSFLKIINKISK</sequence>
<comment type="function">
    <text evidence="1">Involved in the gluconeogenesis. Catalyzes stereospecifically the conversion of dihydroxyacetone phosphate (DHAP) to D-glyceraldehyde-3-phosphate (G3P).</text>
</comment>
<comment type="catalytic activity">
    <reaction evidence="1">
        <text>D-glyceraldehyde 3-phosphate = dihydroxyacetone phosphate</text>
        <dbReference type="Rhea" id="RHEA:18585"/>
        <dbReference type="ChEBI" id="CHEBI:57642"/>
        <dbReference type="ChEBI" id="CHEBI:59776"/>
        <dbReference type="EC" id="5.3.1.1"/>
    </reaction>
</comment>
<comment type="pathway">
    <text evidence="1">Carbohydrate biosynthesis; gluconeogenesis.</text>
</comment>
<comment type="pathway">
    <text evidence="1">Carbohydrate degradation; glycolysis; D-glyceraldehyde 3-phosphate from glycerone phosphate: step 1/1.</text>
</comment>
<comment type="subunit">
    <text evidence="1">Homodimer.</text>
</comment>
<comment type="subcellular location">
    <subcellularLocation>
        <location evidence="1">Cytoplasm</location>
    </subcellularLocation>
</comment>
<comment type="similarity">
    <text evidence="1">Belongs to the triosephosphate isomerase family.</text>
</comment>
<gene>
    <name evidence="1" type="primary">tpiA</name>
    <name type="ordered locus">BDU_59</name>
</gene>
<keyword id="KW-0963">Cytoplasm</keyword>
<keyword id="KW-0312">Gluconeogenesis</keyword>
<keyword id="KW-0324">Glycolysis</keyword>
<keyword id="KW-0413">Isomerase</keyword>
<dbReference type="EC" id="5.3.1.1" evidence="1"/>
<dbReference type="EMBL" id="CP000976">
    <property type="protein sequence ID" value="ACH93015.1"/>
    <property type="molecule type" value="Genomic_DNA"/>
</dbReference>
<dbReference type="RefSeq" id="WP_012537827.1">
    <property type="nucleotide sequence ID" value="NC_011229.1"/>
</dbReference>
<dbReference type="SMR" id="B5RKV4"/>
<dbReference type="STRING" id="412419.BDU_59"/>
<dbReference type="KEGG" id="bdu:BDU_59"/>
<dbReference type="eggNOG" id="COG0149">
    <property type="taxonomic scope" value="Bacteria"/>
</dbReference>
<dbReference type="HOGENOM" id="CLU_024251_2_3_12"/>
<dbReference type="OrthoDB" id="9809429at2"/>
<dbReference type="UniPathway" id="UPA00109">
    <property type="reaction ID" value="UER00189"/>
</dbReference>
<dbReference type="UniPathway" id="UPA00138"/>
<dbReference type="Proteomes" id="UP000000611">
    <property type="component" value="Chromosome"/>
</dbReference>
<dbReference type="GO" id="GO:0005829">
    <property type="term" value="C:cytosol"/>
    <property type="evidence" value="ECO:0007669"/>
    <property type="project" value="TreeGrafter"/>
</dbReference>
<dbReference type="GO" id="GO:0004807">
    <property type="term" value="F:triose-phosphate isomerase activity"/>
    <property type="evidence" value="ECO:0007669"/>
    <property type="project" value="UniProtKB-UniRule"/>
</dbReference>
<dbReference type="GO" id="GO:0006094">
    <property type="term" value="P:gluconeogenesis"/>
    <property type="evidence" value="ECO:0007669"/>
    <property type="project" value="UniProtKB-UniRule"/>
</dbReference>
<dbReference type="GO" id="GO:0046166">
    <property type="term" value="P:glyceraldehyde-3-phosphate biosynthetic process"/>
    <property type="evidence" value="ECO:0007669"/>
    <property type="project" value="TreeGrafter"/>
</dbReference>
<dbReference type="GO" id="GO:0019563">
    <property type="term" value="P:glycerol catabolic process"/>
    <property type="evidence" value="ECO:0007669"/>
    <property type="project" value="TreeGrafter"/>
</dbReference>
<dbReference type="GO" id="GO:0006096">
    <property type="term" value="P:glycolytic process"/>
    <property type="evidence" value="ECO:0007669"/>
    <property type="project" value="UniProtKB-UniRule"/>
</dbReference>
<dbReference type="CDD" id="cd00311">
    <property type="entry name" value="TIM"/>
    <property type="match status" value="1"/>
</dbReference>
<dbReference type="FunFam" id="3.20.20.70:FF:000016">
    <property type="entry name" value="Triosephosphate isomerase"/>
    <property type="match status" value="1"/>
</dbReference>
<dbReference type="Gene3D" id="3.20.20.70">
    <property type="entry name" value="Aldolase class I"/>
    <property type="match status" value="1"/>
</dbReference>
<dbReference type="HAMAP" id="MF_00147_B">
    <property type="entry name" value="TIM_B"/>
    <property type="match status" value="1"/>
</dbReference>
<dbReference type="InterPro" id="IPR013785">
    <property type="entry name" value="Aldolase_TIM"/>
</dbReference>
<dbReference type="InterPro" id="IPR035990">
    <property type="entry name" value="TIM_sf"/>
</dbReference>
<dbReference type="InterPro" id="IPR022896">
    <property type="entry name" value="TrioseP_Isoase_bac/euk"/>
</dbReference>
<dbReference type="InterPro" id="IPR000652">
    <property type="entry name" value="Triosephosphate_isomerase"/>
</dbReference>
<dbReference type="InterPro" id="IPR020861">
    <property type="entry name" value="Triosephosphate_isomerase_AS"/>
</dbReference>
<dbReference type="NCBIfam" id="TIGR00419">
    <property type="entry name" value="tim"/>
    <property type="match status" value="1"/>
</dbReference>
<dbReference type="PANTHER" id="PTHR21139">
    <property type="entry name" value="TRIOSEPHOSPHATE ISOMERASE"/>
    <property type="match status" value="1"/>
</dbReference>
<dbReference type="PANTHER" id="PTHR21139:SF42">
    <property type="entry name" value="TRIOSEPHOSPHATE ISOMERASE"/>
    <property type="match status" value="1"/>
</dbReference>
<dbReference type="Pfam" id="PF00121">
    <property type="entry name" value="TIM"/>
    <property type="match status" value="1"/>
</dbReference>
<dbReference type="SUPFAM" id="SSF51351">
    <property type="entry name" value="Triosephosphate isomerase (TIM)"/>
    <property type="match status" value="1"/>
</dbReference>
<dbReference type="PROSITE" id="PS00171">
    <property type="entry name" value="TIM_1"/>
    <property type="match status" value="1"/>
</dbReference>
<dbReference type="PROSITE" id="PS51440">
    <property type="entry name" value="TIM_2"/>
    <property type="match status" value="1"/>
</dbReference>
<organism>
    <name type="scientific">Borrelia duttonii (strain Ly)</name>
    <dbReference type="NCBI Taxonomy" id="412419"/>
    <lineage>
        <taxon>Bacteria</taxon>
        <taxon>Pseudomonadati</taxon>
        <taxon>Spirochaetota</taxon>
        <taxon>Spirochaetia</taxon>
        <taxon>Spirochaetales</taxon>
        <taxon>Borreliaceae</taxon>
        <taxon>Borrelia</taxon>
    </lineage>
</organism>
<reference key="1">
    <citation type="journal article" date="2008" name="PLoS Genet.">
        <title>The genome of Borrelia recurrentis, the agent of deadly louse-borne relapsing fever, is a degraded subset of tick-borne Borrelia duttonii.</title>
        <authorList>
            <person name="Lescot M."/>
            <person name="Audic S."/>
            <person name="Robert C."/>
            <person name="Nguyen T.T."/>
            <person name="Blanc G."/>
            <person name="Cutler S.J."/>
            <person name="Wincker P."/>
            <person name="Couloux A."/>
            <person name="Claverie J.-M."/>
            <person name="Raoult D."/>
            <person name="Drancourt M."/>
        </authorList>
    </citation>
    <scope>NUCLEOTIDE SEQUENCE [LARGE SCALE GENOMIC DNA]</scope>
    <source>
        <strain>Ly</strain>
    </source>
</reference>
<proteinExistence type="inferred from homology"/>
<name>TPIS_BORDL</name>
<protein>
    <recommendedName>
        <fullName evidence="1">Triosephosphate isomerase</fullName>
        <shortName evidence="1">TIM</shortName>
        <shortName evidence="1">TPI</shortName>
        <ecNumber evidence="1">5.3.1.1</ecNumber>
    </recommendedName>
    <alternativeName>
        <fullName evidence="1">Triose-phosphate isomerase</fullName>
    </alternativeName>
</protein>
<evidence type="ECO:0000255" key="1">
    <source>
        <dbReference type="HAMAP-Rule" id="MF_00147"/>
    </source>
</evidence>